<proteinExistence type="inferred from homology"/>
<feature type="chain" id="PRO_1000138077" description="tRNA-modifying protein YgfZ">
    <location>
        <begin position="1"/>
        <end position="326"/>
    </location>
</feature>
<feature type="binding site" evidence="1">
    <location>
        <position position="27"/>
    </location>
    <ligand>
        <name>folate</name>
        <dbReference type="ChEBI" id="CHEBI:62501"/>
    </ligand>
</feature>
<feature type="binding site" evidence="1">
    <location>
        <position position="189"/>
    </location>
    <ligand>
        <name>folate</name>
        <dbReference type="ChEBI" id="CHEBI:62501"/>
    </ligand>
</feature>
<dbReference type="EMBL" id="CU928158">
    <property type="protein sequence ID" value="CAQ90328.1"/>
    <property type="molecule type" value="Genomic_DNA"/>
</dbReference>
<dbReference type="RefSeq" id="WP_000886105.1">
    <property type="nucleotide sequence ID" value="NC_011740.1"/>
</dbReference>
<dbReference type="SMR" id="B7LPB2"/>
<dbReference type="GeneID" id="75060546"/>
<dbReference type="KEGG" id="efe:EFER_2834"/>
<dbReference type="HOGENOM" id="CLU_007884_6_1_6"/>
<dbReference type="OrthoDB" id="9796287at2"/>
<dbReference type="Proteomes" id="UP000000745">
    <property type="component" value="Chromosome"/>
</dbReference>
<dbReference type="GO" id="GO:0005737">
    <property type="term" value="C:cytoplasm"/>
    <property type="evidence" value="ECO:0007669"/>
    <property type="project" value="UniProtKB-SubCell"/>
</dbReference>
<dbReference type="GO" id="GO:0005542">
    <property type="term" value="F:folic acid binding"/>
    <property type="evidence" value="ECO:0007669"/>
    <property type="project" value="UniProtKB-UniRule"/>
</dbReference>
<dbReference type="GO" id="GO:0016226">
    <property type="term" value="P:iron-sulfur cluster assembly"/>
    <property type="evidence" value="ECO:0007669"/>
    <property type="project" value="TreeGrafter"/>
</dbReference>
<dbReference type="GO" id="GO:0009451">
    <property type="term" value="P:RNA modification"/>
    <property type="evidence" value="ECO:0007669"/>
    <property type="project" value="InterPro"/>
</dbReference>
<dbReference type="GO" id="GO:0008033">
    <property type="term" value="P:tRNA processing"/>
    <property type="evidence" value="ECO:0007669"/>
    <property type="project" value="UniProtKB-UniRule"/>
</dbReference>
<dbReference type="FunFam" id="2.40.30.160:FF:000001">
    <property type="entry name" value="tRNA-modifying protein YgfZ"/>
    <property type="match status" value="1"/>
</dbReference>
<dbReference type="FunFam" id="3.30.70.1400:FF:000002">
    <property type="entry name" value="tRNA-modifying protein YgfZ"/>
    <property type="match status" value="1"/>
</dbReference>
<dbReference type="FunFam" id="3.30.70.1630:FF:000001">
    <property type="entry name" value="tRNA-modifying protein YgfZ"/>
    <property type="match status" value="1"/>
</dbReference>
<dbReference type="Gene3D" id="2.40.30.160">
    <property type="match status" value="1"/>
</dbReference>
<dbReference type="Gene3D" id="3.30.70.1630">
    <property type="match status" value="1"/>
</dbReference>
<dbReference type="Gene3D" id="3.30.70.1400">
    <property type="entry name" value="Aminomethyltransferase beta-barrel domains"/>
    <property type="match status" value="1"/>
</dbReference>
<dbReference type="HAMAP" id="MF_01175">
    <property type="entry name" value="tRNA_modifying_YgfZ"/>
    <property type="match status" value="1"/>
</dbReference>
<dbReference type="InterPro" id="IPR006222">
    <property type="entry name" value="GCV_T_N"/>
</dbReference>
<dbReference type="InterPro" id="IPR029043">
    <property type="entry name" value="GcvT/YgfZ_C"/>
</dbReference>
<dbReference type="InterPro" id="IPR023758">
    <property type="entry name" value="tRNA-modifying_YgfZ"/>
</dbReference>
<dbReference type="InterPro" id="IPR045179">
    <property type="entry name" value="YgfZ/GcvT"/>
</dbReference>
<dbReference type="InterPro" id="IPR017703">
    <property type="entry name" value="YgfZ/GcvT_CS"/>
</dbReference>
<dbReference type="InterPro" id="IPR048451">
    <property type="entry name" value="YgfZ_barrel"/>
</dbReference>
<dbReference type="NCBIfam" id="NF007110">
    <property type="entry name" value="PRK09559.1"/>
    <property type="match status" value="1"/>
</dbReference>
<dbReference type="NCBIfam" id="TIGR03317">
    <property type="entry name" value="ygfZ_signature"/>
    <property type="match status" value="1"/>
</dbReference>
<dbReference type="PANTHER" id="PTHR22602">
    <property type="entry name" value="TRANSFERASE CAF17, MITOCHONDRIAL-RELATED"/>
    <property type="match status" value="1"/>
</dbReference>
<dbReference type="PANTHER" id="PTHR22602:SF0">
    <property type="entry name" value="TRANSFERASE CAF17, MITOCHONDRIAL-RELATED"/>
    <property type="match status" value="1"/>
</dbReference>
<dbReference type="Pfam" id="PF01571">
    <property type="entry name" value="GCV_T"/>
    <property type="match status" value="1"/>
</dbReference>
<dbReference type="Pfam" id="PF21130">
    <property type="entry name" value="YgfZ_barrel"/>
    <property type="match status" value="1"/>
</dbReference>
<dbReference type="SUPFAM" id="SSF101790">
    <property type="entry name" value="Aminomethyltransferase beta-barrel domain"/>
    <property type="match status" value="1"/>
</dbReference>
<dbReference type="SUPFAM" id="SSF103025">
    <property type="entry name" value="Folate-binding domain"/>
    <property type="match status" value="1"/>
</dbReference>
<organism>
    <name type="scientific">Escherichia fergusonii (strain ATCC 35469 / DSM 13698 / CCUG 18766 / IAM 14443 / JCM 21226 / LMG 7866 / NBRC 102419 / NCTC 12128 / CDC 0568-73)</name>
    <dbReference type="NCBI Taxonomy" id="585054"/>
    <lineage>
        <taxon>Bacteria</taxon>
        <taxon>Pseudomonadati</taxon>
        <taxon>Pseudomonadota</taxon>
        <taxon>Gammaproteobacteria</taxon>
        <taxon>Enterobacterales</taxon>
        <taxon>Enterobacteriaceae</taxon>
        <taxon>Escherichia</taxon>
    </lineage>
</organism>
<sequence length="326" mass="36216">MAFTPFPPRQPTASARLPLTLMTLDDWALATITGTDSEKYMQGQVTADVSQMTEDQHLLAAHCDAKGKMWSNLRLFRDGDGFAWIERRSVRESQLTELKKYAVFSKVTIAPDDERVLLGVAGFQARAALANLFSELPSKEKQVIREGATTLLWFEHPAERFLIVTDEATANTLTDKLRGEAELNNSQQWLALNIEAGFPVIDAANSGQFIPQATNLQALGGISFKKGCYTGQEMVARAKFRGANKRALWLLAGSASRLPEAGEDLELKMGENWRRTGTVLAAVKLEDGQVVVQVVMNNDMEPDSIFRVRDDMNTLHIEPLPYSLEE</sequence>
<keyword id="KW-0963">Cytoplasm</keyword>
<keyword id="KW-0290">Folate-binding</keyword>
<keyword id="KW-0819">tRNA processing</keyword>
<gene>
    <name evidence="1" type="primary">ygfZ</name>
    <name type="ordered locus">EFER_2834</name>
</gene>
<name>YGFZ_ESCF3</name>
<comment type="function">
    <text evidence="1">Folate-binding protein involved in regulating the level of ATP-DnaA and in the modification of some tRNAs. It is probably a key factor in regulatory networks that act via tRNA modification, such as initiation of chromosomal replication.</text>
</comment>
<comment type="subcellular location">
    <subcellularLocation>
        <location evidence="1">Cytoplasm</location>
    </subcellularLocation>
</comment>
<comment type="similarity">
    <text evidence="1">Belongs to the tRNA-modifying YgfZ family.</text>
</comment>
<accession>B7LPB2</accession>
<evidence type="ECO:0000255" key="1">
    <source>
        <dbReference type="HAMAP-Rule" id="MF_01175"/>
    </source>
</evidence>
<reference key="1">
    <citation type="journal article" date="2009" name="PLoS Genet.">
        <title>Organised genome dynamics in the Escherichia coli species results in highly diverse adaptive paths.</title>
        <authorList>
            <person name="Touchon M."/>
            <person name="Hoede C."/>
            <person name="Tenaillon O."/>
            <person name="Barbe V."/>
            <person name="Baeriswyl S."/>
            <person name="Bidet P."/>
            <person name="Bingen E."/>
            <person name="Bonacorsi S."/>
            <person name="Bouchier C."/>
            <person name="Bouvet O."/>
            <person name="Calteau A."/>
            <person name="Chiapello H."/>
            <person name="Clermont O."/>
            <person name="Cruveiller S."/>
            <person name="Danchin A."/>
            <person name="Diard M."/>
            <person name="Dossat C."/>
            <person name="Karoui M.E."/>
            <person name="Frapy E."/>
            <person name="Garry L."/>
            <person name="Ghigo J.M."/>
            <person name="Gilles A.M."/>
            <person name="Johnson J."/>
            <person name="Le Bouguenec C."/>
            <person name="Lescat M."/>
            <person name="Mangenot S."/>
            <person name="Martinez-Jehanne V."/>
            <person name="Matic I."/>
            <person name="Nassif X."/>
            <person name="Oztas S."/>
            <person name="Petit M.A."/>
            <person name="Pichon C."/>
            <person name="Rouy Z."/>
            <person name="Ruf C.S."/>
            <person name="Schneider D."/>
            <person name="Tourret J."/>
            <person name="Vacherie B."/>
            <person name="Vallenet D."/>
            <person name="Medigue C."/>
            <person name="Rocha E.P.C."/>
            <person name="Denamur E."/>
        </authorList>
    </citation>
    <scope>NUCLEOTIDE SEQUENCE [LARGE SCALE GENOMIC DNA]</scope>
    <source>
        <strain>ATCC 35469 / DSM 13698 / BCRC 15582 / CCUG 18766 / IAM 14443 / JCM 21226 / LMG 7866 / NBRC 102419 / NCTC 12128 / CDC 0568-73</strain>
    </source>
</reference>
<protein>
    <recommendedName>
        <fullName evidence="1">tRNA-modifying protein YgfZ</fullName>
    </recommendedName>
</protein>